<proteinExistence type="inferred from homology"/>
<evidence type="ECO:0000255" key="1">
    <source>
        <dbReference type="HAMAP-Rule" id="MF_01320"/>
    </source>
</evidence>
<evidence type="ECO:0000256" key="2">
    <source>
        <dbReference type="SAM" id="MobiDB-lite"/>
    </source>
</evidence>
<evidence type="ECO:0000305" key="3"/>
<gene>
    <name evidence="1" type="primary">rplB</name>
    <name type="ordered locus">Lcho_3996</name>
</gene>
<dbReference type="EMBL" id="CP001013">
    <property type="protein sequence ID" value="ACB36250.1"/>
    <property type="molecule type" value="Genomic_DNA"/>
</dbReference>
<dbReference type="RefSeq" id="WP_012348995.1">
    <property type="nucleotide sequence ID" value="NC_010524.1"/>
</dbReference>
<dbReference type="SMR" id="B1Y8I4"/>
<dbReference type="STRING" id="395495.Lcho_3996"/>
<dbReference type="KEGG" id="lch:Lcho_3996"/>
<dbReference type="eggNOG" id="COG0090">
    <property type="taxonomic scope" value="Bacteria"/>
</dbReference>
<dbReference type="HOGENOM" id="CLU_036235_2_1_4"/>
<dbReference type="OrthoDB" id="9778722at2"/>
<dbReference type="Proteomes" id="UP000001693">
    <property type="component" value="Chromosome"/>
</dbReference>
<dbReference type="GO" id="GO:0015934">
    <property type="term" value="C:large ribosomal subunit"/>
    <property type="evidence" value="ECO:0007669"/>
    <property type="project" value="InterPro"/>
</dbReference>
<dbReference type="GO" id="GO:0019843">
    <property type="term" value="F:rRNA binding"/>
    <property type="evidence" value="ECO:0007669"/>
    <property type="project" value="UniProtKB-UniRule"/>
</dbReference>
<dbReference type="GO" id="GO:0003735">
    <property type="term" value="F:structural constituent of ribosome"/>
    <property type="evidence" value="ECO:0007669"/>
    <property type="project" value="InterPro"/>
</dbReference>
<dbReference type="GO" id="GO:0016740">
    <property type="term" value="F:transferase activity"/>
    <property type="evidence" value="ECO:0007669"/>
    <property type="project" value="InterPro"/>
</dbReference>
<dbReference type="GO" id="GO:0002181">
    <property type="term" value="P:cytoplasmic translation"/>
    <property type="evidence" value="ECO:0007669"/>
    <property type="project" value="TreeGrafter"/>
</dbReference>
<dbReference type="FunFam" id="2.30.30.30:FF:000001">
    <property type="entry name" value="50S ribosomal protein L2"/>
    <property type="match status" value="1"/>
</dbReference>
<dbReference type="FunFam" id="2.40.50.140:FF:000003">
    <property type="entry name" value="50S ribosomal protein L2"/>
    <property type="match status" value="1"/>
</dbReference>
<dbReference type="FunFam" id="4.10.950.10:FF:000001">
    <property type="entry name" value="50S ribosomal protein L2"/>
    <property type="match status" value="1"/>
</dbReference>
<dbReference type="Gene3D" id="2.30.30.30">
    <property type="match status" value="1"/>
</dbReference>
<dbReference type="Gene3D" id="2.40.50.140">
    <property type="entry name" value="Nucleic acid-binding proteins"/>
    <property type="match status" value="1"/>
</dbReference>
<dbReference type="Gene3D" id="4.10.950.10">
    <property type="entry name" value="Ribosomal protein L2, domain 3"/>
    <property type="match status" value="1"/>
</dbReference>
<dbReference type="HAMAP" id="MF_01320_B">
    <property type="entry name" value="Ribosomal_uL2_B"/>
    <property type="match status" value="1"/>
</dbReference>
<dbReference type="InterPro" id="IPR012340">
    <property type="entry name" value="NA-bd_OB-fold"/>
</dbReference>
<dbReference type="InterPro" id="IPR014722">
    <property type="entry name" value="Rib_uL2_dom2"/>
</dbReference>
<dbReference type="InterPro" id="IPR002171">
    <property type="entry name" value="Ribosomal_uL2"/>
</dbReference>
<dbReference type="InterPro" id="IPR005880">
    <property type="entry name" value="Ribosomal_uL2_bac/org-type"/>
</dbReference>
<dbReference type="InterPro" id="IPR022669">
    <property type="entry name" value="Ribosomal_uL2_C"/>
</dbReference>
<dbReference type="InterPro" id="IPR022671">
    <property type="entry name" value="Ribosomal_uL2_CS"/>
</dbReference>
<dbReference type="InterPro" id="IPR014726">
    <property type="entry name" value="Ribosomal_uL2_dom3"/>
</dbReference>
<dbReference type="InterPro" id="IPR022666">
    <property type="entry name" value="Ribosomal_uL2_RNA-bd_dom"/>
</dbReference>
<dbReference type="InterPro" id="IPR008991">
    <property type="entry name" value="Translation_prot_SH3-like_sf"/>
</dbReference>
<dbReference type="NCBIfam" id="TIGR01171">
    <property type="entry name" value="rplB_bact"/>
    <property type="match status" value="1"/>
</dbReference>
<dbReference type="PANTHER" id="PTHR13691:SF5">
    <property type="entry name" value="LARGE RIBOSOMAL SUBUNIT PROTEIN UL2M"/>
    <property type="match status" value="1"/>
</dbReference>
<dbReference type="PANTHER" id="PTHR13691">
    <property type="entry name" value="RIBOSOMAL PROTEIN L2"/>
    <property type="match status" value="1"/>
</dbReference>
<dbReference type="Pfam" id="PF00181">
    <property type="entry name" value="Ribosomal_L2"/>
    <property type="match status" value="1"/>
</dbReference>
<dbReference type="Pfam" id="PF03947">
    <property type="entry name" value="Ribosomal_L2_C"/>
    <property type="match status" value="1"/>
</dbReference>
<dbReference type="PIRSF" id="PIRSF002158">
    <property type="entry name" value="Ribosomal_L2"/>
    <property type="match status" value="1"/>
</dbReference>
<dbReference type="SMART" id="SM01383">
    <property type="entry name" value="Ribosomal_L2"/>
    <property type="match status" value="1"/>
</dbReference>
<dbReference type="SMART" id="SM01382">
    <property type="entry name" value="Ribosomal_L2_C"/>
    <property type="match status" value="1"/>
</dbReference>
<dbReference type="SUPFAM" id="SSF50249">
    <property type="entry name" value="Nucleic acid-binding proteins"/>
    <property type="match status" value="1"/>
</dbReference>
<dbReference type="SUPFAM" id="SSF50104">
    <property type="entry name" value="Translation proteins SH3-like domain"/>
    <property type="match status" value="1"/>
</dbReference>
<dbReference type="PROSITE" id="PS00467">
    <property type="entry name" value="RIBOSOMAL_L2"/>
    <property type="match status" value="1"/>
</dbReference>
<protein>
    <recommendedName>
        <fullName evidence="1">Large ribosomal subunit protein uL2</fullName>
    </recommendedName>
    <alternativeName>
        <fullName evidence="3">50S ribosomal protein L2</fullName>
    </alternativeName>
</protein>
<feature type="chain" id="PRO_1000141574" description="Large ribosomal subunit protein uL2">
    <location>
        <begin position="1"/>
        <end position="274"/>
    </location>
</feature>
<feature type="region of interest" description="Disordered" evidence="2">
    <location>
        <begin position="224"/>
        <end position="254"/>
    </location>
</feature>
<feature type="compositionally biased region" description="Basic and acidic residues" evidence="2">
    <location>
        <begin position="229"/>
        <end position="239"/>
    </location>
</feature>
<sequence>MAVVKVKPTSPGRRGVVKIVHKHLHKGKPEASLLEPQMQNAGRNNNGHITVRHKGGGHKHHYRVVDFRRNKDGIPAKVERIEYDPNRTAHIALICYADGERSYIIAPRGLEAGQTVLNGAEAPIKAGNTLPIRNIPVGSTIHCVEMMPGKGAQIARSAGTSVTLMAREGIYAQVRLRSGEVRKIHIDCRATIGEVSNEEHNLRQYGKAGAKRWLGIRPTVRGVAMNPVDHPHGGGEGRTGEGQAPVSPWNTLTKGYRTRNNKRTQTFIVSRRKK</sequence>
<accession>B1Y8I4</accession>
<reference key="1">
    <citation type="submission" date="2008-03" db="EMBL/GenBank/DDBJ databases">
        <title>Complete sequence of Leptothrix cholodnii SP-6.</title>
        <authorList>
            <consortium name="US DOE Joint Genome Institute"/>
            <person name="Copeland A."/>
            <person name="Lucas S."/>
            <person name="Lapidus A."/>
            <person name="Glavina del Rio T."/>
            <person name="Dalin E."/>
            <person name="Tice H."/>
            <person name="Bruce D."/>
            <person name="Goodwin L."/>
            <person name="Pitluck S."/>
            <person name="Chertkov O."/>
            <person name="Brettin T."/>
            <person name="Detter J.C."/>
            <person name="Han C."/>
            <person name="Kuske C.R."/>
            <person name="Schmutz J."/>
            <person name="Larimer F."/>
            <person name="Land M."/>
            <person name="Hauser L."/>
            <person name="Kyrpides N."/>
            <person name="Lykidis A."/>
            <person name="Emerson D."/>
            <person name="Richardson P."/>
        </authorList>
    </citation>
    <scope>NUCLEOTIDE SEQUENCE [LARGE SCALE GENOMIC DNA]</scope>
    <source>
        <strain>ATCC 51168 / LMG 8142 / SP-6</strain>
    </source>
</reference>
<keyword id="KW-1185">Reference proteome</keyword>
<keyword id="KW-0687">Ribonucleoprotein</keyword>
<keyword id="KW-0689">Ribosomal protein</keyword>
<keyword id="KW-0694">RNA-binding</keyword>
<keyword id="KW-0699">rRNA-binding</keyword>
<organism>
    <name type="scientific">Leptothrix cholodnii (strain ATCC 51168 / LMG 8142 / SP-6)</name>
    <name type="common">Leptothrix discophora (strain SP-6)</name>
    <dbReference type="NCBI Taxonomy" id="395495"/>
    <lineage>
        <taxon>Bacteria</taxon>
        <taxon>Pseudomonadati</taxon>
        <taxon>Pseudomonadota</taxon>
        <taxon>Betaproteobacteria</taxon>
        <taxon>Burkholderiales</taxon>
        <taxon>Sphaerotilaceae</taxon>
        <taxon>Leptothrix</taxon>
    </lineage>
</organism>
<name>RL2_LEPCP</name>
<comment type="function">
    <text evidence="1">One of the primary rRNA binding proteins. Required for association of the 30S and 50S subunits to form the 70S ribosome, for tRNA binding and peptide bond formation. It has been suggested to have peptidyltransferase activity; this is somewhat controversial. Makes several contacts with the 16S rRNA in the 70S ribosome.</text>
</comment>
<comment type="subunit">
    <text evidence="1">Part of the 50S ribosomal subunit. Forms a bridge to the 30S subunit in the 70S ribosome.</text>
</comment>
<comment type="similarity">
    <text evidence="1">Belongs to the universal ribosomal protein uL2 family.</text>
</comment>